<dbReference type="EMBL" id="U55072">
    <property type="protein sequence ID" value="AAC56599.1"/>
    <property type="molecule type" value="Genomic_DNA"/>
</dbReference>
<dbReference type="SMR" id="Q90176"/>
<dbReference type="GO" id="GO:0019028">
    <property type="term" value="C:viral capsid"/>
    <property type="evidence" value="ECO:0007669"/>
    <property type="project" value="UniProtKB-KW"/>
</dbReference>
<gene>
    <name type="primary">P15</name>
</gene>
<name>VP15_NPVBM</name>
<organism>
    <name type="scientific">Bombyx mori nuclear polyhedrosis virus</name>
    <name type="common">BmNPV</name>
    <dbReference type="NCBI Taxonomy" id="271108"/>
    <lineage>
        <taxon>Viruses</taxon>
        <taxon>Viruses incertae sedis</taxon>
        <taxon>Naldaviricetes</taxon>
        <taxon>Lefavirales</taxon>
        <taxon>Baculoviridae</taxon>
        <taxon>Alphabaculovirus</taxon>
        <taxon>Alphabaculovirus bomori</taxon>
    </lineage>
</organism>
<keyword id="KW-0167">Capsid protein</keyword>
<keyword id="KW-0946">Virion</keyword>
<sequence length="126" mass="15038">MNTRGCVNNNKMIFMNALGLQPQSKVKIIAHKTLEKFKRDAYTCFKGVKAIKNELKTYNLTLQQYNEALNQCALNDSRWRDTNNWHHDIKEGVKINKRHIYRVNFNSKTKEIKEYYYIKVECYVNN</sequence>
<reference key="1">
    <citation type="journal article" date="1997" name="Gene">
        <title>Characterization of a domain of the genome of BmNPV containing a functional gene for a small capsid protein and harboring deletions eliminating three open reading frames that are present in AcNPV.</title>
        <authorList>
            <person name="Lu M."/>
            <person name="Iatrou K."/>
        </authorList>
    </citation>
    <scope>NUCLEOTIDE SEQUENCE [GENOMIC DNA]</scope>
</reference>
<comment type="subcellular location">
    <subcellularLocation>
        <location evidence="1">Virion</location>
    </subcellularLocation>
</comment>
<accession>Q90176</accession>
<evidence type="ECO:0000305" key="1"/>
<feature type="chain" id="PRO_0000132885" description="Putative 15 kDa capsid protein">
    <location>
        <begin position="1"/>
        <end position="126"/>
    </location>
</feature>
<organismHost>
    <name type="scientific">Bombyx mori</name>
    <name type="common">Silk moth</name>
    <dbReference type="NCBI Taxonomy" id="7091"/>
</organismHost>
<protein>
    <recommendedName>
        <fullName>Putative 15 kDa capsid protein</fullName>
    </recommendedName>
</protein>
<proteinExistence type="predicted"/>